<accession>B0K0V4</accession>
<organism>
    <name type="scientific">Thermoanaerobacter sp. (strain X514)</name>
    <dbReference type="NCBI Taxonomy" id="399726"/>
    <lineage>
        <taxon>Bacteria</taxon>
        <taxon>Bacillati</taxon>
        <taxon>Bacillota</taxon>
        <taxon>Clostridia</taxon>
        <taxon>Thermoanaerobacterales</taxon>
        <taxon>Thermoanaerobacteraceae</taxon>
        <taxon>Thermoanaerobacter</taxon>
    </lineage>
</organism>
<reference key="1">
    <citation type="submission" date="2008-01" db="EMBL/GenBank/DDBJ databases">
        <title>Complete sequence of Thermoanaerobacter sp. X514.</title>
        <authorList>
            <consortium name="US DOE Joint Genome Institute"/>
            <person name="Copeland A."/>
            <person name="Lucas S."/>
            <person name="Lapidus A."/>
            <person name="Barry K."/>
            <person name="Glavina del Rio T."/>
            <person name="Dalin E."/>
            <person name="Tice H."/>
            <person name="Pitluck S."/>
            <person name="Bruce D."/>
            <person name="Goodwin L."/>
            <person name="Saunders E."/>
            <person name="Brettin T."/>
            <person name="Detter J.C."/>
            <person name="Han C."/>
            <person name="Schmutz J."/>
            <person name="Larimer F."/>
            <person name="Land M."/>
            <person name="Hauser L."/>
            <person name="Kyrpides N."/>
            <person name="Kim E."/>
            <person name="Hemme C."/>
            <person name="Fields M.W."/>
            <person name="He Z."/>
            <person name="Zhou J."/>
            <person name="Richardson P."/>
        </authorList>
    </citation>
    <scope>NUCLEOTIDE SEQUENCE [LARGE SCALE GENOMIC DNA]</scope>
    <source>
        <strain>X514</strain>
    </source>
</reference>
<proteinExistence type="inferred from homology"/>
<feature type="chain" id="PRO_1000120895" description="NAD kinase">
    <location>
        <begin position="1"/>
        <end position="283"/>
    </location>
</feature>
<feature type="active site" description="Proton acceptor" evidence="1">
    <location>
        <position position="68"/>
    </location>
</feature>
<feature type="binding site" evidence="1">
    <location>
        <begin position="68"/>
        <end position="69"/>
    </location>
    <ligand>
        <name>NAD(+)</name>
        <dbReference type="ChEBI" id="CHEBI:57540"/>
    </ligand>
</feature>
<feature type="binding site" evidence="1">
    <location>
        <begin position="142"/>
        <end position="143"/>
    </location>
    <ligand>
        <name>NAD(+)</name>
        <dbReference type="ChEBI" id="CHEBI:57540"/>
    </ligand>
</feature>
<feature type="binding site" evidence="1">
    <location>
        <position position="153"/>
    </location>
    <ligand>
        <name>NAD(+)</name>
        <dbReference type="ChEBI" id="CHEBI:57540"/>
    </ligand>
</feature>
<feature type="binding site" evidence="1">
    <location>
        <position position="172"/>
    </location>
    <ligand>
        <name>NAD(+)</name>
        <dbReference type="ChEBI" id="CHEBI:57540"/>
    </ligand>
</feature>
<feature type="binding site" evidence="1">
    <location>
        <begin position="183"/>
        <end position="188"/>
    </location>
    <ligand>
        <name>NAD(+)</name>
        <dbReference type="ChEBI" id="CHEBI:57540"/>
    </ligand>
</feature>
<feature type="binding site" evidence="1">
    <location>
        <position position="242"/>
    </location>
    <ligand>
        <name>NAD(+)</name>
        <dbReference type="ChEBI" id="CHEBI:57540"/>
    </ligand>
</feature>
<evidence type="ECO:0000255" key="1">
    <source>
        <dbReference type="HAMAP-Rule" id="MF_00361"/>
    </source>
</evidence>
<sequence length="283" mass="31908">MKKVGVIPNINKDKDLEVTKSVVKWLLEHDSEPYLNEIVASKMGYDEYGKKSTDIYSKSDFIIALGGDGTILNVARLCAPFGTPIFAVNLGHLGFLTEVDMNEVFVSLDKIYKGEYTVEKRMMLEANVVKNDMEIINFRALNDIVITRGAFSRMARINAYVNNNYVDTYLADGVIIATPTGSTAYSLSAGGPIVYPTVEVIIITPICPHTLYSRSIIVSPDDVIRLEISEENQDLMITTDGQQGYKLDYRDIIYIKKSNEYTNLIRVKNTNFFDLLRDKLTER</sequence>
<protein>
    <recommendedName>
        <fullName evidence="1">NAD kinase</fullName>
        <ecNumber evidence="1">2.7.1.23</ecNumber>
    </recommendedName>
    <alternativeName>
        <fullName evidence="1">ATP-dependent NAD kinase</fullName>
    </alternativeName>
</protein>
<name>NADK_THEPX</name>
<keyword id="KW-0067">ATP-binding</keyword>
<keyword id="KW-0963">Cytoplasm</keyword>
<keyword id="KW-0418">Kinase</keyword>
<keyword id="KW-0520">NAD</keyword>
<keyword id="KW-0521">NADP</keyword>
<keyword id="KW-0547">Nucleotide-binding</keyword>
<keyword id="KW-0808">Transferase</keyword>
<dbReference type="EC" id="2.7.1.23" evidence="1"/>
<dbReference type="EMBL" id="CP000923">
    <property type="protein sequence ID" value="ABY92829.1"/>
    <property type="molecule type" value="Genomic_DNA"/>
</dbReference>
<dbReference type="RefSeq" id="WP_003868020.1">
    <property type="nucleotide sequence ID" value="NC_010320.1"/>
</dbReference>
<dbReference type="SMR" id="B0K0V4"/>
<dbReference type="KEGG" id="tex:Teth514_1542"/>
<dbReference type="HOGENOM" id="CLU_008831_0_1_9"/>
<dbReference type="Proteomes" id="UP000002155">
    <property type="component" value="Chromosome"/>
</dbReference>
<dbReference type="GO" id="GO:0005737">
    <property type="term" value="C:cytoplasm"/>
    <property type="evidence" value="ECO:0007669"/>
    <property type="project" value="UniProtKB-SubCell"/>
</dbReference>
<dbReference type="GO" id="GO:0005524">
    <property type="term" value="F:ATP binding"/>
    <property type="evidence" value="ECO:0007669"/>
    <property type="project" value="UniProtKB-KW"/>
</dbReference>
<dbReference type="GO" id="GO:0046872">
    <property type="term" value="F:metal ion binding"/>
    <property type="evidence" value="ECO:0007669"/>
    <property type="project" value="UniProtKB-UniRule"/>
</dbReference>
<dbReference type="GO" id="GO:0051287">
    <property type="term" value="F:NAD binding"/>
    <property type="evidence" value="ECO:0007669"/>
    <property type="project" value="UniProtKB-ARBA"/>
</dbReference>
<dbReference type="GO" id="GO:0003951">
    <property type="term" value="F:NAD+ kinase activity"/>
    <property type="evidence" value="ECO:0007669"/>
    <property type="project" value="UniProtKB-UniRule"/>
</dbReference>
<dbReference type="GO" id="GO:0019674">
    <property type="term" value="P:NAD metabolic process"/>
    <property type="evidence" value="ECO:0007669"/>
    <property type="project" value="InterPro"/>
</dbReference>
<dbReference type="GO" id="GO:0006741">
    <property type="term" value="P:NADP biosynthetic process"/>
    <property type="evidence" value="ECO:0007669"/>
    <property type="project" value="UniProtKB-UniRule"/>
</dbReference>
<dbReference type="FunFam" id="2.60.200.30:FF:000009">
    <property type="entry name" value="Poly(P)/ATP NAD kinase"/>
    <property type="match status" value="1"/>
</dbReference>
<dbReference type="Gene3D" id="3.40.50.10330">
    <property type="entry name" value="Probable inorganic polyphosphate/atp-NAD kinase, domain 1"/>
    <property type="match status" value="1"/>
</dbReference>
<dbReference type="Gene3D" id="2.60.200.30">
    <property type="entry name" value="Probable inorganic polyphosphate/atp-NAD kinase, domain 2"/>
    <property type="match status" value="1"/>
</dbReference>
<dbReference type="HAMAP" id="MF_00361">
    <property type="entry name" value="NAD_kinase"/>
    <property type="match status" value="1"/>
</dbReference>
<dbReference type="InterPro" id="IPR017438">
    <property type="entry name" value="ATP-NAD_kinase_N"/>
</dbReference>
<dbReference type="InterPro" id="IPR017437">
    <property type="entry name" value="ATP-NAD_kinase_PpnK-typ_C"/>
</dbReference>
<dbReference type="InterPro" id="IPR016064">
    <property type="entry name" value="NAD/diacylglycerol_kinase_sf"/>
</dbReference>
<dbReference type="InterPro" id="IPR002504">
    <property type="entry name" value="NADK"/>
</dbReference>
<dbReference type="PANTHER" id="PTHR20275">
    <property type="entry name" value="NAD KINASE"/>
    <property type="match status" value="1"/>
</dbReference>
<dbReference type="PANTHER" id="PTHR20275:SF0">
    <property type="entry name" value="NAD KINASE"/>
    <property type="match status" value="1"/>
</dbReference>
<dbReference type="Pfam" id="PF01513">
    <property type="entry name" value="NAD_kinase"/>
    <property type="match status" value="1"/>
</dbReference>
<dbReference type="Pfam" id="PF20143">
    <property type="entry name" value="NAD_kinase_C"/>
    <property type="match status" value="1"/>
</dbReference>
<dbReference type="SUPFAM" id="SSF111331">
    <property type="entry name" value="NAD kinase/diacylglycerol kinase-like"/>
    <property type="match status" value="1"/>
</dbReference>
<gene>
    <name evidence="1" type="primary">nadK</name>
    <name type="ordered locus">Teth514_1542</name>
</gene>
<comment type="function">
    <text evidence="1">Involved in the regulation of the intracellular balance of NAD and NADP, and is a key enzyme in the biosynthesis of NADP. Catalyzes specifically the phosphorylation on 2'-hydroxyl of the adenosine moiety of NAD to yield NADP.</text>
</comment>
<comment type="catalytic activity">
    <reaction evidence="1">
        <text>NAD(+) + ATP = ADP + NADP(+) + H(+)</text>
        <dbReference type="Rhea" id="RHEA:18629"/>
        <dbReference type="ChEBI" id="CHEBI:15378"/>
        <dbReference type="ChEBI" id="CHEBI:30616"/>
        <dbReference type="ChEBI" id="CHEBI:57540"/>
        <dbReference type="ChEBI" id="CHEBI:58349"/>
        <dbReference type="ChEBI" id="CHEBI:456216"/>
        <dbReference type="EC" id="2.7.1.23"/>
    </reaction>
</comment>
<comment type="cofactor">
    <cofactor evidence="1">
        <name>a divalent metal cation</name>
        <dbReference type="ChEBI" id="CHEBI:60240"/>
    </cofactor>
</comment>
<comment type="subcellular location">
    <subcellularLocation>
        <location evidence="1">Cytoplasm</location>
    </subcellularLocation>
</comment>
<comment type="similarity">
    <text evidence="1">Belongs to the NAD kinase family.</text>
</comment>